<comment type="function">
    <text evidence="1">Involved in the import of serine and threonine into the cell, with the concomitant import of sodium (symport system).</text>
</comment>
<comment type="catalytic activity">
    <reaction evidence="1">
        <text>L-serine(in) + Na(+)(in) = L-serine(out) + Na(+)(out)</text>
        <dbReference type="Rhea" id="RHEA:29575"/>
        <dbReference type="ChEBI" id="CHEBI:29101"/>
        <dbReference type="ChEBI" id="CHEBI:33384"/>
    </reaction>
    <physiologicalReaction direction="right-to-left" evidence="1">
        <dbReference type="Rhea" id="RHEA:29577"/>
    </physiologicalReaction>
</comment>
<comment type="catalytic activity">
    <reaction evidence="1">
        <text>L-threonine(in) + Na(+)(in) = L-threonine(out) + Na(+)(out)</text>
        <dbReference type="Rhea" id="RHEA:69999"/>
        <dbReference type="ChEBI" id="CHEBI:29101"/>
        <dbReference type="ChEBI" id="CHEBI:57926"/>
    </reaction>
    <physiologicalReaction direction="right-to-left" evidence="1">
        <dbReference type="Rhea" id="RHEA:70001"/>
    </physiologicalReaction>
</comment>
<comment type="subcellular location">
    <subcellularLocation>
        <location evidence="1">Cell inner membrane</location>
        <topology evidence="1">Multi-pass membrane protein</topology>
    </subcellularLocation>
</comment>
<comment type="similarity">
    <text evidence="1">Belongs to the dicarboxylate/amino acid:cation symporter (DAACS) (TC 2.A.23) family.</text>
</comment>
<name>SSTT_PSEPF</name>
<feature type="chain" id="PRO_0000309110" description="Serine/threonine transporter SstT">
    <location>
        <begin position="1"/>
        <end position="413"/>
    </location>
</feature>
<feature type="transmembrane region" description="Helical" evidence="1">
    <location>
        <begin position="18"/>
        <end position="38"/>
    </location>
</feature>
<feature type="transmembrane region" description="Helical" evidence="1">
    <location>
        <begin position="52"/>
        <end position="72"/>
    </location>
</feature>
<feature type="transmembrane region" description="Helical" evidence="1">
    <location>
        <begin position="86"/>
        <end position="106"/>
    </location>
</feature>
<feature type="transmembrane region" description="Helical" evidence="1">
    <location>
        <begin position="119"/>
        <end position="139"/>
    </location>
</feature>
<feature type="transmembrane region" description="Helical" evidence="1">
    <location>
        <begin position="145"/>
        <end position="165"/>
    </location>
</feature>
<feature type="transmembrane region" description="Helical" evidence="1">
    <location>
        <begin position="196"/>
        <end position="216"/>
    </location>
</feature>
<feature type="transmembrane region" description="Helical" evidence="1">
    <location>
        <begin position="221"/>
        <end position="241"/>
    </location>
</feature>
<feature type="transmembrane region" description="Helical" evidence="1">
    <location>
        <begin position="292"/>
        <end position="312"/>
    </location>
</feature>
<feature type="transmembrane region" description="Helical" evidence="1">
    <location>
        <begin position="320"/>
        <end position="340"/>
    </location>
</feature>
<feature type="transmembrane region" description="Helical" evidence="1">
    <location>
        <begin position="360"/>
        <end position="380"/>
    </location>
</feature>
<sequence length="413" mass="42713">MPFMTASSPSLLQRLKSLSLVTQILIGLIAGIALALFAPEAAKGTAFIGKVFVSALKAVAPILVFVLVMASIANHKHGQETHIRPILFLYLLGTFAAAVVAVIASMMFPSHLVLSTDNIAVSAPGGISEVLQSLLLSVVDNPVSALMNANFIGILAWAIGMGVAIRHAGDTTREVLGDLSNGVTVIVRVVIRFAPLGIFGLVASTLATSGFGALIGYAHLLAVLLGCMLFVALVMNPLIVFWKLRRNPYPLTLQCLRESGITAFFTRSSAANIPVNLELSKRLGLHEDTYSVSIPLGATINMAGAAITITVLSLAAVHTLGIAVDIPTAILLSVVAAICACGASGVAGGSLLLIPLACSLFGIPSEIAMQVVAVGFIIGVLQDSAETALNSSTDVLFTAAACLGEEQKAQRPA</sequence>
<gene>
    <name evidence="1" type="primary">sstT</name>
    <name type="ordered locus">Pfl01_3709</name>
</gene>
<dbReference type="EMBL" id="CP000094">
    <property type="protein sequence ID" value="ABA75447.1"/>
    <property type="molecule type" value="Genomic_DNA"/>
</dbReference>
<dbReference type="SMR" id="Q3K9V7"/>
<dbReference type="KEGG" id="pfo:Pfl01_3709"/>
<dbReference type="eggNOG" id="COG3633">
    <property type="taxonomic scope" value="Bacteria"/>
</dbReference>
<dbReference type="HOGENOM" id="CLU_044581_0_0_6"/>
<dbReference type="Proteomes" id="UP000002704">
    <property type="component" value="Chromosome"/>
</dbReference>
<dbReference type="GO" id="GO:0005886">
    <property type="term" value="C:plasma membrane"/>
    <property type="evidence" value="ECO:0007669"/>
    <property type="project" value="UniProtKB-SubCell"/>
</dbReference>
<dbReference type="GO" id="GO:0005295">
    <property type="term" value="F:neutral L-amino acid:sodium symporter activity"/>
    <property type="evidence" value="ECO:0007669"/>
    <property type="project" value="TreeGrafter"/>
</dbReference>
<dbReference type="GO" id="GO:0032329">
    <property type="term" value="P:serine transport"/>
    <property type="evidence" value="ECO:0007669"/>
    <property type="project" value="InterPro"/>
</dbReference>
<dbReference type="GO" id="GO:0015826">
    <property type="term" value="P:threonine transport"/>
    <property type="evidence" value="ECO:0007669"/>
    <property type="project" value="InterPro"/>
</dbReference>
<dbReference type="FunFam" id="1.10.3860.10:FF:000003">
    <property type="entry name" value="Serine/threonine transporter sstT"/>
    <property type="match status" value="1"/>
</dbReference>
<dbReference type="Gene3D" id="1.10.3860.10">
    <property type="entry name" value="Sodium:dicarboxylate symporter"/>
    <property type="match status" value="1"/>
</dbReference>
<dbReference type="HAMAP" id="MF_01582">
    <property type="entry name" value="Ser_Thr_transp_SstT"/>
    <property type="match status" value="1"/>
</dbReference>
<dbReference type="InterPro" id="IPR001991">
    <property type="entry name" value="Na-dicarboxylate_symporter"/>
</dbReference>
<dbReference type="InterPro" id="IPR036458">
    <property type="entry name" value="Na:dicarbo_symporter_sf"/>
</dbReference>
<dbReference type="InterPro" id="IPR023025">
    <property type="entry name" value="Ser_Thr_transp_SstT"/>
</dbReference>
<dbReference type="NCBIfam" id="NF010151">
    <property type="entry name" value="PRK13628.1"/>
    <property type="match status" value="1"/>
</dbReference>
<dbReference type="PANTHER" id="PTHR42865">
    <property type="entry name" value="PROTON/GLUTAMATE-ASPARTATE SYMPORTER"/>
    <property type="match status" value="1"/>
</dbReference>
<dbReference type="PANTHER" id="PTHR42865:SF8">
    <property type="entry name" value="SERINE_THREONINE TRANSPORTER SSTT"/>
    <property type="match status" value="1"/>
</dbReference>
<dbReference type="Pfam" id="PF00375">
    <property type="entry name" value="SDF"/>
    <property type="match status" value="1"/>
</dbReference>
<dbReference type="PRINTS" id="PR00173">
    <property type="entry name" value="EDTRNSPORT"/>
</dbReference>
<dbReference type="SUPFAM" id="SSF118215">
    <property type="entry name" value="Proton glutamate symport protein"/>
    <property type="match status" value="1"/>
</dbReference>
<accession>Q3K9V7</accession>
<organism>
    <name type="scientific">Pseudomonas fluorescens (strain Pf0-1)</name>
    <dbReference type="NCBI Taxonomy" id="205922"/>
    <lineage>
        <taxon>Bacteria</taxon>
        <taxon>Pseudomonadati</taxon>
        <taxon>Pseudomonadota</taxon>
        <taxon>Gammaproteobacteria</taxon>
        <taxon>Pseudomonadales</taxon>
        <taxon>Pseudomonadaceae</taxon>
        <taxon>Pseudomonas</taxon>
    </lineage>
</organism>
<reference key="1">
    <citation type="journal article" date="2009" name="Genome Biol.">
        <title>Genomic and genetic analyses of diversity and plant interactions of Pseudomonas fluorescens.</title>
        <authorList>
            <person name="Silby M.W."/>
            <person name="Cerdeno-Tarraga A.M."/>
            <person name="Vernikos G.S."/>
            <person name="Giddens S.R."/>
            <person name="Jackson R.W."/>
            <person name="Preston G.M."/>
            <person name="Zhang X.-X."/>
            <person name="Moon C.D."/>
            <person name="Gehrig S.M."/>
            <person name="Godfrey S.A.C."/>
            <person name="Knight C.G."/>
            <person name="Malone J.G."/>
            <person name="Robinson Z."/>
            <person name="Spiers A.J."/>
            <person name="Harris S."/>
            <person name="Challis G.L."/>
            <person name="Yaxley A.M."/>
            <person name="Harris D."/>
            <person name="Seeger K."/>
            <person name="Murphy L."/>
            <person name="Rutter S."/>
            <person name="Squares R."/>
            <person name="Quail M.A."/>
            <person name="Saunders E."/>
            <person name="Mavromatis K."/>
            <person name="Brettin T.S."/>
            <person name="Bentley S.D."/>
            <person name="Hothersall J."/>
            <person name="Stephens E."/>
            <person name="Thomas C.M."/>
            <person name="Parkhill J."/>
            <person name="Levy S.B."/>
            <person name="Rainey P.B."/>
            <person name="Thomson N.R."/>
        </authorList>
    </citation>
    <scope>NUCLEOTIDE SEQUENCE [LARGE SCALE GENOMIC DNA]</scope>
    <source>
        <strain>Pf0-1</strain>
    </source>
</reference>
<keyword id="KW-0029">Amino-acid transport</keyword>
<keyword id="KW-0997">Cell inner membrane</keyword>
<keyword id="KW-1003">Cell membrane</keyword>
<keyword id="KW-0472">Membrane</keyword>
<keyword id="KW-0769">Symport</keyword>
<keyword id="KW-0812">Transmembrane</keyword>
<keyword id="KW-1133">Transmembrane helix</keyword>
<keyword id="KW-0813">Transport</keyword>
<protein>
    <recommendedName>
        <fullName evidence="1">Serine/threonine transporter SstT</fullName>
    </recommendedName>
    <alternativeName>
        <fullName evidence="1">Na(+)/serine-threonine symporter</fullName>
    </alternativeName>
</protein>
<evidence type="ECO:0000255" key="1">
    <source>
        <dbReference type="HAMAP-Rule" id="MF_01582"/>
    </source>
</evidence>
<proteinExistence type="inferred from homology"/>